<evidence type="ECO:0000250" key="1"/>
<evidence type="ECO:0000255" key="2">
    <source>
        <dbReference type="PROSITE-ProRule" id="PRU00794"/>
    </source>
</evidence>
<evidence type="ECO:0000305" key="3"/>
<feature type="chain" id="PRO_0000057075" description="Uncharacterized Nudix hydrolase CA_C0446">
    <location>
        <begin position="1"/>
        <end position="206"/>
    </location>
</feature>
<feature type="domain" description="Nudix hydrolase" evidence="2">
    <location>
        <begin position="29"/>
        <end position="169"/>
    </location>
</feature>
<feature type="short sequence motif" description="Nudix box">
    <location>
        <begin position="69"/>
        <end position="90"/>
    </location>
</feature>
<feature type="binding site" evidence="1">
    <location>
        <position position="84"/>
    </location>
    <ligand>
        <name>Mg(2+)</name>
        <dbReference type="ChEBI" id="CHEBI:18420"/>
    </ligand>
</feature>
<feature type="binding site" evidence="1">
    <location>
        <position position="88"/>
    </location>
    <ligand>
        <name>Mg(2+)</name>
        <dbReference type="ChEBI" id="CHEBI:18420"/>
    </ligand>
</feature>
<protein>
    <recommendedName>
        <fullName>Uncharacterized Nudix hydrolase CA_C0446</fullName>
        <ecNumber>3.6.-.-</ecNumber>
    </recommendedName>
</protein>
<proteinExistence type="inferred from homology"/>
<comment type="cofactor">
    <cofactor evidence="1">
        <name>Mg(2+)</name>
        <dbReference type="ChEBI" id="CHEBI:18420"/>
    </cofactor>
</comment>
<comment type="similarity">
    <text evidence="3">Belongs to the Nudix hydrolase family.</text>
</comment>
<gene>
    <name type="ordered locus">CA_C0446</name>
</gene>
<keyword id="KW-0378">Hydrolase</keyword>
<keyword id="KW-0460">Magnesium</keyword>
<keyword id="KW-0479">Metal-binding</keyword>
<keyword id="KW-1185">Reference proteome</keyword>
<sequence>MEEEFLDIFDEEERLIGRKSRKEVHEKGYWHSTFHCWVVKREGKKTFLIFQKRHPLKDTAPNMFDVSSAGHIKSGESIEDGVRELKEELGIDAKPNELINIGIIKEEFHIGKNIDREFCHIYIYSNKAEIESYTLQRDEVVGLVKIEIDELARFLDNKIDGVFAEGFIVNQEGRRYKLSKILNKDDFVPHKYGYYKIVLRALMDDY</sequence>
<accession>Q97LV8</accession>
<name>Y446_CLOAB</name>
<dbReference type="EC" id="3.6.-.-"/>
<dbReference type="EMBL" id="AE001437">
    <property type="protein sequence ID" value="AAK78426.1"/>
    <property type="molecule type" value="Genomic_DNA"/>
</dbReference>
<dbReference type="PIR" id="G96954">
    <property type="entry name" value="G96954"/>
</dbReference>
<dbReference type="RefSeq" id="NP_347086.1">
    <property type="nucleotide sequence ID" value="NC_003030.1"/>
</dbReference>
<dbReference type="RefSeq" id="WP_010963768.1">
    <property type="nucleotide sequence ID" value="NC_003030.1"/>
</dbReference>
<dbReference type="SMR" id="Q97LV8"/>
<dbReference type="STRING" id="272562.CA_C0446"/>
<dbReference type="KEGG" id="cac:CA_C0446"/>
<dbReference type="PATRIC" id="fig|272562.8.peg.644"/>
<dbReference type="eggNOG" id="COG1443">
    <property type="taxonomic scope" value="Bacteria"/>
</dbReference>
<dbReference type="HOGENOM" id="CLU_060552_1_0_9"/>
<dbReference type="OrthoDB" id="9804563at2"/>
<dbReference type="Proteomes" id="UP000000814">
    <property type="component" value="Chromosome"/>
</dbReference>
<dbReference type="GO" id="GO:0016787">
    <property type="term" value="F:hydrolase activity"/>
    <property type="evidence" value="ECO:0007669"/>
    <property type="project" value="UniProtKB-KW"/>
</dbReference>
<dbReference type="GO" id="GO:0046872">
    <property type="term" value="F:metal ion binding"/>
    <property type="evidence" value="ECO:0007669"/>
    <property type="project" value="UniProtKB-KW"/>
</dbReference>
<dbReference type="CDD" id="cd04692">
    <property type="entry name" value="NUDIX_Hydrolase"/>
    <property type="match status" value="1"/>
</dbReference>
<dbReference type="Gene3D" id="3.90.79.10">
    <property type="entry name" value="Nucleoside Triphosphate Pyrophosphohydrolase"/>
    <property type="match status" value="1"/>
</dbReference>
<dbReference type="InterPro" id="IPR015797">
    <property type="entry name" value="NUDIX_hydrolase-like_dom_sf"/>
</dbReference>
<dbReference type="InterPro" id="IPR000086">
    <property type="entry name" value="NUDIX_hydrolase_dom"/>
</dbReference>
<dbReference type="PANTHER" id="PTHR10885">
    <property type="entry name" value="ISOPENTENYL-DIPHOSPHATE DELTA-ISOMERASE"/>
    <property type="match status" value="1"/>
</dbReference>
<dbReference type="PANTHER" id="PTHR10885:SF0">
    <property type="entry name" value="ISOPENTENYL-DIPHOSPHATE DELTA-ISOMERASE"/>
    <property type="match status" value="1"/>
</dbReference>
<dbReference type="Pfam" id="PF00293">
    <property type="entry name" value="NUDIX"/>
    <property type="match status" value="1"/>
</dbReference>
<dbReference type="SUPFAM" id="SSF55811">
    <property type="entry name" value="Nudix"/>
    <property type="match status" value="1"/>
</dbReference>
<dbReference type="PROSITE" id="PS51462">
    <property type="entry name" value="NUDIX"/>
    <property type="match status" value="1"/>
</dbReference>
<reference key="1">
    <citation type="journal article" date="2001" name="J. Bacteriol.">
        <title>Genome sequence and comparative analysis of the solvent-producing bacterium Clostridium acetobutylicum.</title>
        <authorList>
            <person name="Noelling J."/>
            <person name="Breton G."/>
            <person name="Omelchenko M.V."/>
            <person name="Makarova K.S."/>
            <person name="Zeng Q."/>
            <person name="Gibson R."/>
            <person name="Lee H.M."/>
            <person name="Dubois J."/>
            <person name="Qiu D."/>
            <person name="Hitti J."/>
            <person name="Wolf Y.I."/>
            <person name="Tatusov R.L."/>
            <person name="Sabathe F."/>
            <person name="Doucette-Stamm L.A."/>
            <person name="Soucaille P."/>
            <person name="Daly M.J."/>
            <person name="Bennett G.N."/>
            <person name="Koonin E.V."/>
            <person name="Smith D.R."/>
        </authorList>
    </citation>
    <scope>NUCLEOTIDE SEQUENCE [LARGE SCALE GENOMIC DNA]</scope>
    <source>
        <strain>ATCC 824 / DSM 792 / JCM 1419 / IAM 19013 / LMG 5710 / NBRC 13948 / NRRL B-527 / VKM B-1787 / 2291 / W</strain>
    </source>
</reference>
<organism>
    <name type="scientific">Clostridium acetobutylicum (strain ATCC 824 / DSM 792 / JCM 1419 / IAM 19013 / LMG 5710 / NBRC 13948 / NRRL B-527 / VKM B-1787 / 2291 / W)</name>
    <dbReference type="NCBI Taxonomy" id="272562"/>
    <lineage>
        <taxon>Bacteria</taxon>
        <taxon>Bacillati</taxon>
        <taxon>Bacillota</taxon>
        <taxon>Clostridia</taxon>
        <taxon>Eubacteriales</taxon>
        <taxon>Clostridiaceae</taxon>
        <taxon>Clostridium</taxon>
    </lineage>
</organism>